<protein>
    <recommendedName>
        <fullName evidence="1">Nucleoside diphosphate kinase</fullName>
        <shortName evidence="1">NDK</shortName>
        <shortName evidence="1">NDP kinase</shortName>
        <ecNumber evidence="1">2.7.4.6</ecNumber>
    </recommendedName>
    <alternativeName>
        <fullName evidence="1">Nucleoside-2-P kinase</fullName>
    </alternativeName>
</protein>
<accession>A6LCB6</accession>
<gene>
    <name evidence="1" type="primary">ndk</name>
    <name type="ordered locus">BDI_1575</name>
</gene>
<feature type="chain" id="PRO_1000026264" description="Nucleoside diphosphate kinase">
    <location>
        <begin position="1"/>
        <end position="153"/>
    </location>
</feature>
<feature type="active site" description="Pros-phosphohistidine intermediate" evidence="1">
    <location>
        <position position="115"/>
    </location>
</feature>
<feature type="binding site" evidence="1">
    <location>
        <position position="9"/>
    </location>
    <ligand>
        <name>ATP</name>
        <dbReference type="ChEBI" id="CHEBI:30616"/>
    </ligand>
</feature>
<feature type="binding site" evidence="1">
    <location>
        <position position="57"/>
    </location>
    <ligand>
        <name>ATP</name>
        <dbReference type="ChEBI" id="CHEBI:30616"/>
    </ligand>
</feature>
<feature type="binding site" evidence="1">
    <location>
        <position position="85"/>
    </location>
    <ligand>
        <name>ATP</name>
        <dbReference type="ChEBI" id="CHEBI:30616"/>
    </ligand>
</feature>
<feature type="binding site" evidence="1">
    <location>
        <position position="91"/>
    </location>
    <ligand>
        <name>ATP</name>
        <dbReference type="ChEBI" id="CHEBI:30616"/>
    </ligand>
</feature>
<feature type="binding site" evidence="1">
    <location>
        <position position="102"/>
    </location>
    <ligand>
        <name>ATP</name>
        <dbReference type="ChEBI" id="CHEBI:30616"/>
    </ligand>
</feature>
<feature type="binding site" evidence="1">
    <location>
        <position position="112"/>
    </location>
    <ligand>
        <name>ATP</name>
        <dbReference type="ChEBI" id="CHEBI:30616"/>
    </ligand>
</feature>
<evidence type="ECO:0000255" key="1">
    <source>
        <dbReference type="HAMAP-Rule" id="MF_00451"/>
    </source>
</evidence>
<sequence length="153" mass="17396">MEKTLVILKPCTVQRGLIGEIVTRFEKKGLRLAGMKMVWLTDEILSEHYAHLKEKPFFQRIKDAMSVCPVIVCCWEGVDAIHVVRTLAGTTNGRNAAPGTIRGDYSMSVQENIVHASDSPETAEIELKRFFKDDEIFDYELKNLLSLYANDEF</sequence>
<name>NDK_PARD8</name>
<proteinExistence type="inferred from homology"/>
<keyword id="KW-0067">ATP-binding</keyword>
<keyword id="KW-0963">Cytoplasm</keyword>
<keyword id="KW-0418">Kinase</keyword>
<keyword id="KW-0460">Magnesium</keyword>
<keyword id="KW-0479">Metal-binding</keyword>
<keyword id="KW-0546">Nucleotide metabolism</keyword>
<keyword id="KW-0547">Nucleotide-binding</keyword>
<keyword id="KW-0597">Phosphoprotein</keyword>
<keyword id="KW-1185">Reference proteome</keyword>
<keyword id="KW-0808">Transferase</keyword>
<organism>
    <name type="scientific">Parabacteroides distasonis (strain ATCC 8503 / DSM 20701 / CIP 104284 / JCM 5825 / NCTC 11152)</name>
    <dbReference type="NCBI Taxonomy" id="435591"/>
    <lineage>
        <taxon>Bacteria</taxon>
        <taxon>Pseudomonadati</taxon>
        <taxon>Bacteroidota</taxon>
        <taxon>Bacteroidia</taxon>
        <taxon>Bacteroidales</taxon>
        <taxon>Tannerellaceae</taxon>
        <taxon>Parabacteroides</taxon>
    </lineage>
</organism>
<dbReference type="EC" id="2.7.4.6" evidence="1"/>
<dbReference type="EMBL" id="CP000140">
    <property type="protein sequence ID" value="ABR43330.1"/>
    <property type="molecule type" value="Genomic_DNA"/>
</dbReference>
<dbReference type="RefSeq" id="WP_011966511.1">
    <property type="nucleotide sequence ID" value="NC_009615.1"/>
</dbReference>
<dbReference type="SMR" id="A6LCB6"/>
<dbReference type="STRING" id="435591.BDI_1575"/>
<dbReference type="PaxDb" id="435591-BDI_1575"/>
<dbReference type="KEGG" id="pdi:BDI_1575"/>
<dbReference type="PATRIC" id="fig|435591.13.peg.1562"/>
<dbReference type="eggNOG" id="COG0105">
    <property type="taxonomic scope" value="Bacteria"/>
</dbReference>
<dbReference type="HOGENOM" id="CLU_060216_6_3_10"/>
<dbReference type="BioCyc" id="PDIS435591:G1G5A-1619-MONOMER"/>
<dbReference type="Proteomes" id="UP000000566">
    <property type="component" value="Chromosome"/>
</dbReference>
<dbReference type="GO" id="GO:0005737">
    <property type="term" value="C:cytoplasm"/>
    <property type="evidence" value="ECO:0007669"/>
    <property type="project" value="UniProtKB-SubCell"/>
</dbReference>
<dbReference type="GO" id="GO:0005524">
    <property type="term" value="F:ATP binding"/>
    <property type="evidence" value="ECO:0007669"/>
    <property type="project" value="UniProtKB-UniRule"/>
</dbReference>
<dbReference type="GO" id="GO:0046872">
    <property type="term" value="F:metal ion binding"/>
    <property type="evidence" value="ECO:0007669"/>
    <property type="project" value="UniProtKB-KW"/>
</dbReference>
<dbReference type="GO" id="GO:0004550">
    <property type="term" value="F:nucleoside diphosphate kinase activity"/>
    <property type="evidence" value="ECO:0007669"/>
    <property type="project" value="UniProtKB-UniRule"/>
</dbReference>
<dbReference type="GO" id="GO:0006241">
    <property type="term" value="P:CTP biosynthetic process"/>
    <property type="evidence" value="ECO:0007669"/>
    <property type="project" value="UniProtKB-UniRule"/>
</dbReference>
<dbReference type="GO" id="GO:0006183">
    <property type="term" value="P:GTP biosynthetic process"/>
    <property type="evidence" value="ECO:0007669"/>
    <property type="project" value="UniProtKB-UniRule"/>
</dbReference>
<dbReference type="GO" id="GO:0006228">
    <property type="term" value="P:UTP biosynthetic process"/>
    <property type="evidence" value="ECO:0007669"/>
    <property type="project" value="UniProtKB-UniRule"/>
</dbReference>
<dbReference type="CDD" id="cd04413">
    <property type="entry name" value="NDPk_I"/>
    <property type="match status" value="1"/>
</dbReference>
<dbReference type="FunFam" id="3.30.70.141:FF:000003">
    <property type="entry name" value="Nucleoside diphosphate kinase"/>
    <property type="match status" value="1"/>
</dbReference>
<dbReference type="Gene3D" id="3.30.70.141">
    <property type="entry name" value="Nucleoside diphosphate kinase-like domain"/>
    <property type="match status" value="1"/>
</dbReference>
<dbReference type="HAMAP" id="MF_00451">
    <property type="entry name" value="NDP_kinase"/>
    <property type="match status" value="1"/>
</dbReference>
<dbReference type="InterPro" id="IPR034907">
    <property type="entry name" value="NDK-like_dom"/>
</dbReference>
<dbReference type="InterPro" id="IPR036850">
    <property type="entry name" value="NDK-like_dom_sf"/>
</dbReference>
<dbReference type="InterPro" id="IPR001564">
    <property type="entry name" value="Nucleoside_diP_kinase"/>
</dbReference>
<dbReference type="InterPro" id="IPR023005">
    <property type="entry name" value="Nucleoside_diP_kinase_AS"/>
</dbReference>
<dbReference type="NCBIfam" id="NF001908">
    <property type="entry name" value="PRK00668.1"/>
    <property type="match status" value="1"/>
</dbReference>
<dbReference type="PANTHER" id="PTHR11349">
    <property type="entry name" value="NUCLEOSIDE DIPHOSPHATE KINASE"/>
    <property type="match status" value="1"/>
</dbReference>
<dbReference type="Pfam" id="PF00334">
    <property type="entry name" value="NDK"/>
    <property type="match status" value="1"/>
</dbReference>
<dbReference type="PRINTS" id="PR01243">
    <property type="entry name" value="NUCDPKINASE"/>
</dbReference>
<dbReference type="SMART" id="SM00562">
    <property type="entry name" value="NDK"/>
    <property type="match status" value="1"/>
</dbReference>
<dbReference type="SUPFAM" id="SSF54919">
    <property type="entry name" value="Nucleoside diphosphate kinase, NDK"/>
    <property type="match status" value="1"/>
</dbReference>
<dbReference type="PROSITE" id="PS00469">
    <property type="entry name" value="NDPK"/>
    <property type="match status" value="1"/>
</dbReference>
<dbReference type="PROSITE" id="PS51374">
    <property type="entry name" value="NDPK_LIKE"/>
    <property type="match status" value="1"/>
</dbReference>
<comment type="function">
    <text evidence="1">Major role in the synthesis of nucleoside triphosphates other than ATP. The ATP gamma phosphate is transferred to the NDP beta phosphate via a ping-pong mechanism, using a phosphorylated active-site intermediate.</text>
</comment>
<comment type="catalytic activity">
    <reaction evidence="1">
        <text>a 2'-deoxyribonucleoside 5'-diphosphate + ATP = a 2'-deoxyribonucleoside 5'-triphosphate + ADP</text>
        <dbReference type="Rhea" id="RHEA:44640"/>
        <dbReference type="ChEBI" id="CHEBI:30616"/>
        <dbReference type="ChEBI" id="CHEBI:61560"/>
        <dbReference type="ChEBI" id="CHEBI:73316"/>
        <dbReference type="ChEBI" id="CHEBI:456216"/>
        <dbReference type="EC" id="2.7.4.6"/>
    </reaction>
</comment>
<comment type="catalytic activity">
    <reaction evidence="1">
        <text>a ribonucleoside 5'-diphosphate + ATP = a ribonucleoside 5'-triphosphate + ADP</text>
        <dbReference type="Rhea" id="RHEA:18113"/>
        <dbReference type="ChEBI" id="CHEBI:30616"/>
        <dbReference type="ChEBI" id="CHEBI:57930"/>
        <dbReference type="ChEBI" id="CHEBI:61557"/>
        <dbReference type="ChEBI" id="CHEBI:456216"/>
        <dbReference type="EC" id="2.7.4.6"/>
    </reaction>
</comment>
<comment type="cofactor">
    <cofactor evidence="1">
        <name>Mg(2+)</name>
        <dbReference type="ChEBI" id="CHEBI:18420"/>
    </cofactor>
</comment>
<comment type="subunit">
    <text evidence="1">Homotetramer.</text>
</comment>
<comment type="subcellular location">
    <subcellularLocation>
        <location evidence="1">Cytoplasm</location>
    </subcellularLocation>
</comment>
<comment type="similarity">
    <text evidence="1">Belongs to the NDK family.</text>
</comment>
<reference key="1">
    <citation type="journal article" date="2007" name="PLoS Biol.">
        <title>Evolution of symbiotic bacteria in the distal human intestine.</title>
        <authorList>
            <person name="Xu J."/>
            <person name="Mahowald M.A."/>
            <person name="Ley R.E."/>
            <person name="Lozupone C.A."/>
            <person name="Hamady M."/>
            <person name="Martens E.C."/>
            <person name="Henrissat B."/>
            <person name="Coutinho P.M."/>
            <person name="Minx P."/>
            <person name="Latreille P."/>
            <person name="Cordum H."/>
            <person name="Van Brunt A."/>
            <person name="Kim K."/>
            <person name="Fulton R.S."/>
            <person name="Fulton L.A."/>
            <person name="Clifton S.W."/>
            <person name="Wilson R.K."/>
            <person name="Knight R.D."/>
            <person name="Gordon J.I."/>
        </authorList>
    </citation>
    <scope>NUCLEOTIDE SEQUENCE [LARGE SCALE GENOMIC DNA]</scope>
    <source>
        <strain>ATCC 8503 / DSM 20701 / CIP 104284 / JCM 5825 / NCTC 11152</strain>
    </source>
</reference>